<keyword id="KW-0002">3D-structure</keyword>
<keyword id="KW-0025">Alternative splicing</keyword>
<keyword id="KW-1003">Cell membrane</keyword>
<keyword id="KW-0966">Cell projection</keyword>
<keyword id="KW-0963">Cytoplasm</keyword>
<keyword id="KW-0344">Guanine-nucleotide releasing factor</keyword>
<keyword id="KW-0472">Membrane</keyword>
<keyword id="KW-0597">Phosphoprotein</keyword>
<keyword id="KW-1185">Reference proteome</keyword>
<name>DOCK8_MOUSE</name>
<reference key="1">
    <citation type="journal article" date="2009" name="PLoS Biol.">
        <title>Lineage-specific biology revealed by a finished genome assembly of the mouse.</title>
        <authorList>
            <person name="Church D.M."/>
            <person name="Goodstadt L."/>
            <person name="Hillier L.W."/>
            <person name="Zody M.C."/>
            <person name="Goldstein S."/>
            <person name="She X."/>
            <person name="Bult C.J."/>
            <person name="Agarwala R."/>
            <person name="Cherry J.L."/>
            <person name="DiCuccio M."/>
            <person name="Hlavina W."/>
            <person name="Kapustin Y."/>
            <person name="Meric P."/>
            <person name="Maglott D."/>
            <person name="Birtle Z."/>
            <person name="Marques A.C."/>
            <person name="Graves T."/>
            <person name="Zhou S."/>
            <person name="Teague B."/>
            <person name="Potamousis K."/>
            <person name="Churas C."/>
            <person name="Place M."/>
            <person name="Herschleb J."/>
            <person name="Runnheim R."/>
            <person name="Forrest D."/>
            <person name="Amos-Landgraf J."/>
            <person name="Schwartz D.C."/>
            <person name="Cheng Z."/>
            <person name="Lindblad-Toh K."/>
            <person name="Eichler E.E."/>
            <person name="Ponting C.P."/>
        </authorList>
    </citation>
    <scope>NUCLEOTIDE SEQUENCE [LARGE SCALE GENOMIC DNA]</scope>
    <source>
        <strain>C57BL/6J</strain>
    </source>
</reference>
<reference key="2">
    <citation type="journal article" date="2005" name="Science">
        <title>The transcriptional landscape of the mammalian genome.</title>
        <authorList>
            <person name="Carninci P."/>
            <person name="Kasukawa T."/>
            <person name="Katayama S."/>
            <person name="Gough J."/>
            <person name="Frith M.C."/>
            <person name="Maeda N."/>
            <person name="Oyama R."/>
            <person name="Ravasi T."/>
            <person name="Lenhard B."/>
            <person name="Wells C."/>
            <person name="Kodzius R."/>
            <person name="Shimokawa K."/>
            <person name="Bajic V.B."/>
            <person name="Brenner S.E."/>
            <person name="Batalov S."/>
            <person name="Forrest A.R."/>
            <person name="Zavolan M."/>
            <person name="Davis M.J."/>
            <person name="Wilming L.G."/>
            <person name="Aidinis V."/>
            <person name="Allen J.E."/>
            <person name="Ambesi-Impiombato A."/>
            <person name="Apweiler R."/>
            <person name="Aturaliya R.N."/>
            <person name="Bailey T.L."/>
            <person name="Bansal M."/>
            <person name="Baxter L."/>
            <person name="Beisel K.W."/>
            <person name="Bersano T."/>
            <person name="Bono H."/>
            <person name="Chalk A.M."/>
            <person name="Chiu K.P."/>
            <person name="Choudhary V."/>
            <person name="Christoffels A."/>
            <person name="Clutterbuck D.R."/>
            <person name="Crowe M.L."/>
            <person name="Dalla E."/>
            <person name="Dalrymple B.P."/>
            <person name="de Bono B."/>
            <person name="Della Gatta G."/>
            <person name="di Bernardo D."/>
            <person name="Down T."/>
            <person name="Engstrom P."/>
            <person name="Fagiolini M."/>
            <person name="Faulkner G."/>
            <person name="Fletcher C.F."/>
            <person name="Fukushima T."/>
            <person name="Furuno M."/>
            <person name="Futaki S."/>
            <person name="Gariboldi M."/>
            <person name="Georgii-Hemming P."/>
            <person name="Gingeras T.R."/>
            <person name="Gojobori T."/>
            <person name="Green R.E."/>
            <person name="Gustincich S."/>
            <person name="Harbers M."/>
            <person name="Hayashi Y."/>
            <person name="Hensch T.K."/>
            <person name="Hirokawa N."/>
            <person name="Hill D."/>
            <person name="Huminiecki L."/>
            <person name="Iacono M."/>
            <person name="Ikeo K."/>
            <person name="Iwama A."/>
            <person name="Ishikawa T."/>
            <person name="Jakt M."/>
            <person name="Kanapin A."/>
            <person name="Katoh M."/>
            <person name="Kawasawa Y."/>
            <person name="Kelso J."/>
            <person name="Kitamura H."/>
            <person name="Kitano H."/>
            <person name="Kollias G."/>
            <person name="Krishnan S.P."/>
            <person name="Kruger A."/>
            <person name="Kummerfeld S.K."/>
            <person name="Kurochkin I.V."/>
            <person name="Lareau L.F."/>
            <person name="Lazarevic D."/>
            <person name="Lipovich L."/>
            <person name="Liu J."/>
            <person name="Liuni S."/>
            <person name="McWilliam S."/>
            <person name="Madan Babu M."/>
            <person name="Madera M."/>
            <person name="Marchionni L."/>
            <person name="Matsuda H."/>
            <person name="Matsuzawa S."/>
            <person name="Miki H."/>
            <person name="Mignone F."/>
            <person name="Miyake S."/>
            <person name="Morris K."/>
            <person name="Mottagui-Tabar S."/>
            <person name="Mulder N."/>
            <person name="Nakano N."/>
            <person name="Nakauchi H."/>
            <person name="Ng P."/>
            <person name="Nilsson R."/>
            <person name="Nishiguchi S."/>
            <person name="Nishikawa S."/>
            <person name="Nori F."/>
            <person name="Ohara O."/>
            <person name="Okazaki Y."/>
            <person name="Orlando V."/>
            <person name="Pang K.C."/>
            <person name="Pavan W.J."/>
            <person name="Pavesi G."/>
            <person name="Pesole G."/>
            <person name="Petrovsky N."/>
            <person name="Piazza S."/>
            <person name="Reed J."/>
            <person name="Reid J.F."/>
            <person name="Ring B.Z."/>
            <person name="Ringwald M."/>
            <person name="Rost B."/>
            <person name="Ruan Y."/>
            <person name="Salzberg S.L."/>
            <person name="Sandelin A."/>
            <person name="Schneider C."/>
            <person name="Schoenbach C."/>
            <person name="Sekiguchi K."/>
            <person name="Semple C.A."/>
            <person name="Seno S."/>
            <person name="Sessa L."/>
            <person name="Sheng Y."/>
            <person name="Shibata Y."/>
            <person name="Shimada H."/>
            <person name="Shimada K."/>
            <person name="Silva D."/>
            <person name="Sinclair B."/>
            <person name="Sperling S."/>
            <person name="Stupka E."/>
            <person name="Sugiura K."/>
            <person name="Sultana R."/>
            <person name="Takenaka Y."/>
            <person name="Taki K."/>
            <person name="Tammoja K."/>
            <person name="Tan S.L."/>
            <person name="Tang S."/>
            <person name="Taylor M.S."/>
            <person name="Tegner J."/>
            <person name="Teichmann S.A."/>
            <person name="Ueda H.R."/>
            <person name="van Nimwegen E."/>
            <person name="Verardo R."/>
            <person name="Wei C.L."/>
            <person name="Yagi K."/>
            <person name="Yamanishi H."/>
            <person name="Zabarovsky E."/>
            <person name="Zhu S."/>
            <person name="Zimmer A."/>
            <person name="Hide W."/>
            <person name="Bult C."/>
            <person name="Grimmond S.M."/>
            <person name="Teasdale R.D."/>
            <person name="Liu E.T."/>
            <person name="Brusic V."/>
            <person name="Quackenbush J."/>
            <person name="Wahlestedt C."/>
            <person name="Mattick J.S."/>
            <person name="Hume D.A."/>
            <person name="Kai C."/>
            <person name="Sasaki D."/>
            <person name="Tomaru Y."/>
            <person name="Fukuda S."/>
            <person name="Kanamori-Katayama M."/>
            <person name="Suzuki M."/>
            <person name="Aoki J."/>
            <person name="Arakawa T."/>
            <person name="Iida J."/>
            <person name="Imamura K."/>
            <person name="Itoh M."/>
            <person name="Kato T."/>
            <person name="Kawaji H."/>
            <person name="Kawagashira N."/>
            <person name="Kawashima T."/>
            <person name="Kojima M."/>
            <person name="Kondo S."/>
            <person name="Konno H."/>
            <person name="Nakano K."/>
            <person name="Ninomiya N."/>
            <person name="Nishio T."/>
            <person name="Okada M."/>
            <person name="Plessy C."/>
            <person name="Shibata K."/>
            <person name="Shiraki T."/>
            <person name="Suzuki S."/>
            <person name="Tagami M."/>
            <person name="Waki K."/>
            <person name="Watahiki A."/>
            <person name="Okamura-Oho Y."/>
            <person name="Suzuki H."/>
            <person name="Kawai J."/>
            <person name="Hayashizaki Y."/>
        </authorList>
    </citation>
    <scope>NUCLEOTIDE SEQUENCE [LARGE SCALE MRNA] (ISOFORM 2)</scope>
    <scope>NUCLEOTIDE SEQUENCE [LARGE SCALE MRNA] OF 1581-2100 (ISOFORM 1)</scope>
    <source>
        <strain>C57BL/6J</strain>
        <tissue>Lung</tissue>
        <tissue>Skin</tissue>
        <tissue>Thymus</tissue>
    </source>
</reference>
<reference key="3">
    <citation type="journal article" date="2004" name="Genome Res.">
        <title>The status, quality, and expansion of the NIH full-length cDNA project: the Mammalian Gene Collection (MGC).</title>
        <authorList>
            <consortium name="The MGC Project Team"/>
        </authorList>
    </citation>
    <scope>NUCLEOTIDE SEQUENCE [LARGE SCALE MRNA] OF 967-2100 (ISOFORM 1)</scope>
    <source>
        <strain>C57BL/6J</strain>
        <strain>FVB/N</strain>
        <strain>FVB/N-3</strain>
        <tissue>Mammary gland</tissue>
    </source>
</reference>
<reference key="4">
    <citation type="journal article" date="2004" name="DNA Res.">
        <title>Prediction of the coding sequences of mouse homologues of FLJ genes: the complete nucleotide sequences of 110 mouse FLJ-homologous cDNAs identified by screening of terminal sequences of cDNA clones randomly sampled from size-fractionated libraries.</title>
        <authorList>
            <person name="Okazaki N."/>
            <person name="Kikuno R."/>
            <person name="Ohara R."/>
            <person name="Inamoto S."/>
            <person name="Koseki H."/>
            <person name="Hiraoka S."/>
            <person name="Saga Y."/>
            <person name="Kitamura H."/>
            <person name="Nakagawa T."/>
            <person name="Nagase T."/>
            <person name="Ohara O."/>
            <person name="Koga H."/>
        </authorList>
    </citation>
    <scope>NUCLEOTIDE SEQUENCE [LARGE SCALE MRNA] OF 992-2100 (ISOFORM 1)</scope>
    <source>
        <strain>ICR</strain>
        <tissue>Embryonic tail</tissue>
    </source>
</reference>
<reference key="5">
    <citation type="journal article" date="2009" name="Immunity">
        <title>The phagosomal proteome in interferon-gamma-activated macrophages.</title>
        <authorList>
            <person name="Trost M."/>
            <person name="English L."/>
            <person name="Lemieux S."/>
            <person name="Courcelles M."/>
            <person name="Desjardins M."/>
            <person name="Thibault P."/>
        </authorList>
    </citation>
    <scope>IDENTIFICATION BY MASS SPECTROMETRY [LARGE SCALE ANALYSIS]</scope>
</reference>
<reference key="6">
    <citation type="journal article" date="2010" name="Cell">
        <title>A tissue-specific atlas of mouse protein phosphorylation and expression.</title>
        <authorList>
            <person name="Huttlin E.L."/>
            <person name="Jedrychowski M.P."/>
            <person name="Elias J.E."/>
            <person name="Goswami T."/>
            <person name="Rad R."/>
            <person name="Beausoleil S.A."/>
            <person name="Villen J."/>
            <person name="Haas W."/>
            <person name="Sowa M.E."/>
            <person name="Gygi S.P."/>
        </authorList>
    </citation>
    <scope>PHOSPHORYLATION [LARGE SCALE ANALYSIS] AT SER-905 AND SER-1244</scope>
    <scope>IDENTIFICATION BY MASS SPECTROMETRY [LARGE SCALE ANALYSIS]</scope>
    <source>
        <tissue>Kidney</tissue>
        <tissue>Lung</tissue>
        <tissue>Spleen</tissue>
    </source>
</reference>
<reference key="7">
    <citation type="journal article" date="2015" name="Proc. Natl. Acad. Sci. U.S.A.">
        <title>Coincidental loss of DOCK8 function in NLRP10-deficient and C3H/HeJ mice results in defective dendritic cell migration.</title>
        <authorList>
            <person name="Krishnaswamy J.K."/>
            <person name="Singh A."/>
            <person name="Gowthaman U."/>
            <person name="Wu R."/>
            <person name="Gorrepati P."/>
            <person name="Sales Nascimento M."/>
            <person name="Gallman A."/>
            <person name="Liu D."/>
            <person name="Rhebergen A.M."/>
            <person name="Calabro S."/>
            <person name="Xu L."/>
            <person name="Ranney P."/>
            <person name="Srivastava A."/>
            <person name="Ranson M."/>
            <person name="Gorham J.D."/>
            <person name="McCaw Z."/>
            <person name="Kleeberger S.R."/>
            <person name="Heinz L.X."/>
            <person name="Mueller A.C."/>
            <person name="Bennett K.L."/>
            <person name="Superti-Furga G."/>
            <person name="Henao-Mejia J."/>
            <person name="Sutterwala F.S."/>
            <person name="Williams A."/>
            <person name="Flavell R.A."/>
            <person name="Eisenbarth S.C."/>
        </authorList>
    </citation>
    <scope>FUNCTION</scope>
    <scope>TISSUE SPECIFICITY</scope>
    <scope>DISRUPTION PHENOTYPE</scope>
    <scope>POLYMORPHISM</scope>
</reference>
<reference key="8">
    <citation type="journal article" date="2017" name="J. Exp. Med.">
        <title>LRCH1 interferes with DOCK8-Cdc42-induced T cell migration and ameliorates experimental autoimmune encephalomyelitis.</title>
        <authorList>
            <person name="Xu X."/>
            <person name="Han L."/>
            <person name="Zhao G."/>
            <person name="Xue S."/>
            <person name="Gao Y."/>
            <person name="Xiao J."/>
            <person name="Zhang S."/>
            <person name="Chen P."/>
            <person name="Wu Z.Y."/>
            <person name="Ding J."/>
            <person name="Hu R."/>
            <person name="Wei B."/>
            <person name="Wang H."/>
        </authorList>
    </citation>
    <scope>FUNCTION</scope>
    <scope>INTERACTION WITH LRCH1</scope>
    <scope>TISSUE SPECIFICITY</scope>
    <scope>IDENTIFICATION BY MASS SPECTROMETRY</scope>
    <scope>MUTAGENESIS OF SER-1827</scope>
</reference>
<reference key="9">
    <citation type="journal article" date="2012" name="Blood">
        <title>DOCK8 is a Cdc42 activator critical for interstitial dendritic cell migration during immune responses.</title>
        <authorList>
            <person name="Harada Y."/>
            <person name="Tanaka Y."/>
            <person name="Terasawa M."/>
            <person name="Pieczyk M."/>
            <person name="Habiro K."/>
            <person name="Katakai T."/>
            <person name="Hanawa-Suetsugu K."/>
            <person name="Kukimoto-Niino M."/>
            <person name="Nishizaki T."/>
            <person name="Shirouzu M."/>
            <person name="Duan X."/>
            <person name="Uruno T."/>
            <person name="Nishikimi A."/>
            <person name="Sanematsu F."/>
            <person name="Yokoyama S."/>
            <person name="Stein J.V."/>
            <person name="Kinashi T."/>
            <person name="Fukui Y."/>
        </authorList>
    </citation>
    <scope>X-RAY CRYSTALLOGRAPHY (2.08 ANGSTROMS) OF 1787-2067 IN COMPLEX WITH HUMAN CDC42</scope>
    <scope>FUNCTION</scope>
    <scope>SUBCELLULAR LOCATION</scope>
    <scope>DOMAIN</scope>
    <scope>DISRUPTION PHENOTYPE</scope>
</reference>
<organism>
    <name type="scientific">Mus musculus</name>
    <name type="common">Mouse</name>
    <dbReference type="NCBI Taxonomy" id="10090"/>
    <lineage>
        <taxon>Eukaryota</taxon>
        <taxon>Metazoa</taxon>
        <taxon>Chordata</taxon>
        <taxon>Craniata</taxon>
        <taxon>Vertebrata</taxon>
        <taxon>Euteleostomi</taxon>
        <taxon>Mammalia</taxon>
        <taxon>Eutheria</taxon>
        <taxon>Euarchontoglires</taxon>
        <taxon>Glires</taxon>
        <taxon>Rodentia</taxon>
        <taxon>Myomorpha</taxon>
        <taxon>Muroidea</taxon>
        <taxon>Muridae</taxon>
        <taxon>Murinae</taxon>
        <taxon>Mus</taxon>
        <taxon>Mus</taxon>
    </lineage>
</organism>
<protein>
    <recommendedName>
        <fullName>Dedicator of cytokinesis protein 8</fullName>
    </recommendedName>
</protein>
<dbReference type="EMBL" id="AC139711">
    <property type="status" value="NOT_ANNOTATED_CDS"/>
    <property type="molecule type" value="Genomic_DNA"/>
</dbReference>
<dbReference type="EMBL" id="AC132319">
    <property type="status" value="NOT_ANNOTATED_CDS"/>
    <property type="molecule type" value="Genomic_DNA"/>
</dbReference>
<dbReference type="EMBL" id="AK004816">
    <property type="protein sequence ID" value="BAB23587.1"/>
    <property type="status" value="ALT_INIT"/>
    <property type="molecule type" value="mRNA"/>
</dbReference>
<dbReference type="EMBL" id="AK028968">
    <property type="protein sequence ID" value="BAC26219.2"/>
    <property type="status" value="ALT_INIT"/>
    <property type="molecule type" value="mRNA"/>
</dbReference>
<dbReference type="EMBL" id="AK038285">
    <property type="protein sequence ID" value="BAC29959.1"/>
    <property type="molecule type" value="mRNA"/>
</dbReference>
<dbReference type="EMBL" id="BC029018">
    <property type="protein sequence ID" value="AAH29018.2"/>
    <property type="molecule type" value="mRNA"/>
</dbReference>
<dbReference type="EMBL" id="BC030316">
    <property type="protein sequence ID" value="AAH30316.2"/>
    <property type="status" value="ALT_INIT"/>
    <property type="molecule type" value="mRNA"/>
</dbReference>
<dbReference type="EMBL" id="BC043470">
    <property type="protein sequence ID" value="AAH43470.1"/>
    <property type="molecule type" value="mRNA"/>
</dbReference>
<dbReference type="EMBL" id="BC055295">
    <property type="protein sequence ID" value="AAH55295.1"/>
    <property type="molecule type" value="mRNA"/>
</dbReference>
<dbReference type="EMBL" id="AK131180">
    <property type="protein sequence ID" value="BAD21430.1"/>
    <property type="status" value="ALT_INIT"/>
    <property type="molecule type" value="mRNA"/>
</dbReference>
<dbReference type="CCDS" id="CCDS37943.1">
    <molecule id="Q8C147-1"/>
</dbReference>
<dbReference type="RefSeq" id="NP_083061.2">
    <molecule id="Q8C147-1"/>
    <property type="nucleotide sequence ID" value="NM_028785.3"/>
</dbReference>
<dbReference type="PDB" id="3VHL">
    <property type="method" value="X-ray"/>
    <property type="resolution" value="2.08 A"/>
    <property type="chains" value="A=1787-2067"/>
</dbReference>
<dbReference type="PDB" id="7CLX">
    <property type="method" value="X-ray"/>
    <property type="resolution" value="1.50 A"/>
    <property type="chains" value="A=556-740"/>
</dbReference>
<dbReference type="PDB" id="7CLY">
    <property type="method" value="X-ray"/>
    <property type="resolution" value="1.43 A"/>
    <property type="chains" value="A=556-740"/>
</dbReference>
<dbReference type="PDBsum" id="3VHL"/>
<dbReference type="PDBsum" id="7CLX"/>
<dbReference type="PDBsum" id="7CLY"/>
<dbReference type="SMR" id="Q8C147"/>
<dbReference type="BioGRID" id="217953">
    <property type="interactions" value="9"/>
</dbReference>
<dbReference type="CORUM" id="Q8C147"/>
<dbReference type="FunCoup" id="Q8C147">
    <property type="interactions" value="3086"/>
</dbReference>
<dbReference type="IntAct" id="Q8C147">
    <property type="interactions" value="5"/>
</dbReference>
<dbReference type="STRING" id="10090.ENSMUSP00000025831"/>
<dbReference type="iPTMnet" id="Q8C147"/>
<dbReference type="PhosphoSitePlus" id="Q8C147"/>
<dbReference type="SwissPalm" id="Q8C147"/>
<dbReference type="jPOST" id="Q8C147"/>
<dbReference type="PaxDb" id="10090-ENSMUSP00000025831"/>
<dbReference type="PeptideAtlas" id="Q8C147"/>
<dbReference type="ProteomicsDB" id="279760">
    <molecule id="Q8C147-1"/>
</dbReference>
<dbReference type="ProteomicsDB" id="279761">
    <molecule id="Q8C147-2"/>
</dbReference>
<dbReference type="Antibodypedia" id="758">
    <property type="antibodies" value="314 antibodies from 26 providers"/>
</dbReference>
<dbReference type="Ensembl" id="ENSMUST00000025831.8">
    <molecule id="Q8C147-1"/>
    <property type="protein sequence ID" value="ENSMUSP00000025831.7"/>
    <property type="gene ID" value="ENSMUSG00000052085.8"/>
</dbReference>
<dbReference type="GeneID" id="76088"/>
<dbReference type="KEGG" id="mmu:76088"/>
<dbReference type="UCSC" id="uc008hba.1">
    <molecule id="Q8C147-1"/>
    <property type="organism name" value="mouse"/>
</dbReference>
<dbReference type="UCSC" id="uc008hbc.1">
    <molecule id="Q8C147-2"/>
    <property type="organism name" value="mouse"/>
</dbReference>
<dbReference type="AGR" id="MGI:1921396"/>
<dbReference type="CTD" id="81704"/>
<dbReference type="MGI" id="MGI:1921396">
    <property type="gene designation" value="Dock8"/>
</dbReference>
<dbReference type="VEuPathDB" id="HostDB:ENSMUSG00000052085"/>
<dbReference type="eggNOG" id="KOG1997">
    <property type="taxonomic scope" value="Eukaryota"/>
</dbReference>
<dbReference type="GeneTree" id="ENSGT00940000155876"/>
<dbReference type="HOGENOM" id="CLU_000624_0_0_1"/>
<dbReference type="InParanoid" id="Q8C147"/>
<dbReference type="OMA" id="MMERKIP"/>
<dbReference type="OrthoDB" id="47328at2759"/>
<dbReference type="PhylomeDB" id="Q8C147"/>
<dbReference type="TreeFam" id="TF313629"/>
<dbReference type="Reactome" id="R-MMU-9013148">
    <property type="pathway name" value="CDC42 GTPase cycle"/>
</dbReference>
<dbReference type="Reactome" id="R-MMU-9013149">
    <property type="pathway name" value="RAC1 GTPase cycle"/>
</dbReference>
<dbReference type="Reactome" id="R-MMU-9013409">
    <property type="pathway name" value="RHOJ GTPase cycle"/>
</dbReference>
<dbReference type="Reactome" id="R-MMU-983231">
    <property type="pathway name" value="Factors involved in megakaryocyte development and platelet production"/>
</dbReference>
<dbReference type="BioGRID-ORCS" id="76088">
    <property type="hits" value="2 hits in 76 CRISPR screens"/>
</dbReference>
<dbReference type="ChiTaRS" id="Dock8">
    <property type="organism name" value="mouse"/>
</dbReference>
<dbReference type="EvolutionaryTrace" id="Q8C147"/>
<dbReference type="PRO" id="PR:Q8C147"/>
<dbReference type="Proteomes" id="UP000000589">
    <property type="component" value="Chromosome 19"/>
</dbReference>
<dbReference type="RNAct" id="Q8C147">
    <property type="molecule type" value="protein"/>
</dbReference>
<dbReference type="Bgee" id="ENSMUSG00000052085">
    <property type="expression patterns" value="Expressed in granulocyte and 169 other cell types or tissues"/>
</dbReference>
<dbReference type="GO" id="GO:0031252">
    <property type="term" value="C:cell leading edge"/>
    <property type="evidence" value="ECO:0000314"/>
    <property type="project" value="MGI"/>
</dbReference>
<dbReference type="GO" id="GO:0005829">
    <property type="term" value="C:cytosol"/>
    <property type="evidence" value="ECO:0007669"/>
    <property type="project" value="Ensembl"/>
</dbReference>
<dbReference type="GO" id="GO:0031258">
    <property type="term" value="C:lamellipodium membrane"/>
    <property type="evidence" value="ECO:0007669"/>
    <property type="project" value="UniProtKB-SubCell"/>
</dbReference>
<dbReference type="GO" id="GO:0005085">
    <property type="term" value="F:guanyl-nucleotide exchange factor activity"/>
    <property type="evidence" value="ECO:0000314"/>
    <property type="project" value="MGI"/>
</dbReference>
<dbReference type="GO" id="GO:1990869">
    <property type="term" value="P:cellular response to chemokine"/>
    <property type="evidence" value="ECO:0007669"/>
    <property type="project" value="Ensembl"/>
</dbReference>
<dbReference type="GO" id="GO:0036336">
    <property type="term" value="P:dendritic cell migration"/>
    <property type="evidence" value="ECO:0000315"/>
    <property type="project" value="UniProtKB"/>
</dbReference>
<dbReference type="GO" id="GO:0001771">
    <property type="term" value="P:immunological synapse formation"/>
    <property type="evidence" value="ECO:0000315"/>
    <property type="project" value="MGI"/>
</dbReference>
<dbReference type="GO" id="GO:0061485">
    <property type="term" value="P:memory T cell proliferation"/>
    <property type="evidence" value="ECO:0000266"/>
    <property type="project" value="MGI"/>
</dbReference>
<dbReference type="GO" id="GO:0070233">
    <property type="term" value="P:negative regulation of T cell apoptotic process"/>
    <property type="evidence" value="ECO:0000315"/>
    <property type="project" value="MGI"/>
</dbReference>
<dbReference type="GO" id="GO:1903905">
    <property type="term" value="P:positive regulation of establishment of T cell polarity"/>
    <property type="evidence" value="ECO:0000315"/>
    <property type="project" value="UniProtKB"/>
</dbReference>
<dbReference type="GO" id="GO:2000406">
    <property type="term" value="P:positive regulation of T cell migration"/>
    <property type="evidence" value="ECO:0000315"/>
    <property type="project" value="UniProtKB"/>
</dbReference>
<dbReference type="GO" id="GO:0007264">
    <property type="term" value="P:small GTPase-mediated signal transduction"/>
    <property type="evidence" value="ECO:0007669"/>
    <property type="project" value="InterPro"/>
</dbReference>
<dbReference type="CDD" id="cd08696">
    <property type="entry name" value="C2_Dock-C"/>
    <property type="match status" value="1"/>
</dbReference>
<dbReference type="CDD" id="cd11701">
    <property type="entry name" value="DHR2_DOCK8"/>
    <property type="match status" value="1"/>
</dbReference>
<dbReference type="FunFam" id="1.20.58.740:FF:000002">
    <property type="entry name" value="Dedicator of cytokinesis protein 7"/>
    <property type="match status" value="1"/>
</dbReference>
<dbReference type="FunFam" id="1.25.40.410:FF:000002">
    <property type="entry name" value="Dedicator of cytokinesis protein 7"/>
    <property type="match status" value="1"/>
</dbReference>
<dbReference type="FunFam" id="2.60.40.150:FF:000022">
    <property type="entry name" value="Dedicator of cytokinesis protein 7"/>
    <property type="match status" value="1"/>
</dbReference>
<dbReference type="Gene3D" id="1.20.58.740">
    <property type="match status" value="1"/>
</dbReference>
<dbReference type="Gene3D" id="1.25.40.410">
    <property type="match status" value="1"/>
</dbReference>
<dbReference type="Gene3D" id="2.60.40.150">
    <property type="entry name" value="C2 domain"/>
    <property type="match status" value="1"/>
</dbReference>
<dbReference type="IDEAL" id="IID50262"/>
<dbReference type="InterPro" id="IPR016024">
    <property type="entry name" value="ARM-type_fold"/>
</dbReference>
<dbReference type="InterPro" id="IPR037808">
    <property type="entry name" value="C2_Dock-C"/>
</dbReference>
<dbReference type="InterPro" id="IPR027007">
    <property type="entry name" value="C2_DOCK-type_domain"/>
</dbReference>
<dbReference type="InterPro" id="IPR035892">
    <property type="entry name" value="C2_domain_sf"/>
</dbReference>
<dbReference type="InterPro" id="IPR026791">
    <property type="entry name" value="DOCK"/>
</dbReference>
<dbReference type="InterPro" id="IPR021816">
    <property type="entry name" value="DOCK_C/D_N"/>
</dbReference>
<dbReference type="InterPro" id="IPR043161">
    <property type="entry name" value="DOCK_C_lobe_A"/>
</dbReference>
<dbReference type="InterPro" id="IPR043162">
    <property type="entry name" value="DOCK_C_lobe_C"/>
</dbReference>
<dbReference type="InterPro" id="IPR027357">
    <property type="entry name" value="DOCKER_dom"/>
</dbReference>
<dbReference type="InterPro" id="IPR046769">
    <property type="entry name" value="DOCKER_Lobe_A"/>
</dbReference>
<dbReference type="InterPro" id="IPR046770">
    <property type="entry name" value="DOCKER_Lobe_B"/>
</dbReference>
<dbReference type="InterPro" id="IPR046773">
    <property type="entry name" value="DOCKER_Lobe_C"/>
</dbReference>
<dbReference type="PANTHER" id="PTHR23317">
    <property type="entry name" value="DEDICATOR OF CYTOKINESIS DOCK"/>
    <property type="match status" value="1"/>
</dbReference>
<dbReference type="PANTHER" id="PTHR23317:SF74">
    <property type="entry name" value="DEDICATOR OF CYTOKINESIS PROTEIN 8"/>
    <property type="match status" value="1"/>
</dbReference>
<dbReference type="Pfam" id="PF06920">
    <property type="entry name" value="DHR-2_Lobe_A"/>
    <property type="match status" value="1"/>
</dbReference>
<dbReference type="Pfam" id="PF20422">
    <property type="entry name" value="DHR-2_Lobe_B"/>
    <property type="match status" value="1"/>
</dbReference>
<dbReference type="Pfam" id="PF20421">
    <property type="entry name" value="DHR-2_Lobe_C"/>
    <property type="match status" value="1"/>
</dbReference>
<dbReference type="Pfam" id="PF14429">
    <property type="entry name" value="DOCK-C2"/>
    <property type="match status" value="1"/>
</dbReference>
<dbReference type="Pfam" id="PF11878">
    <property type="entry name" value="DOCK_C-D_N"/>
    <property type="match status" value="1"/>
</dbReference>
<dbReference type="SUPFAM" id="SSF48371">
    <property type="entry name" value="ARM repeat"/>
    <property type="match status" value="1"/>
</dbReference>
<dbReference type="PROSITE" id="PS51650">
    <property type="entry name" value="C2_DOCK"/>
    <property type="match status" value="1"/>
</dbReference>
<dbReference type="PROSITE" id="PS51651">
    <property type="entry name" value="DOCKER"/>
    <property type="match status" value="1"/>
</dbReference>
<evidence type="ECO:0000250" key="1">
    <source>
        <dbReference type="UniProtKB" id="Q8NF50"/>
    </source>
</evidence>
<evidence type="ECO:0000255" key="2">
    <source>
        <dbReference type="PROSITE-ProRule" id="PRU00983"/>
    </source>
</evidence>
<evidence type="ECO:0000255" key="3">
    <source>
        <dbReference type="PROSITE-ProRule" id="PRU00984"/>
    </source>
</evidence>
<evidence type="ECO:0000256" key="4">
    <source>
        <dbReference type="SAM" id="MobiDB-lite"/>
    </source>
</evidence>
<evidence type="ECO:0000269" key="5">
    <source>
    </source>
</evidence>
<evidence type="ECO:0000269" key="6">
    <source>
    </source>
</evidence>
<evidence type="ECO:0000269" key="7">
    <source>
    </source>
</evidence>
<evidence type="ECO:0000303" key="8">
    <source>
    </source>
</evidence>
<evidence type="ECO:0000305" key="9"/>
<evidence type="ECO:0000305" key="10">
    <source>
    </source>
</evidence>
<evidence type="ECO:0007744" key="11">
    <source>
    </source>
</evidence>
<evidence type="ECO:0007829" key="12">
    <source>
        <dbReference type="PDB" id="3VHL"/>
    </source>
</evidence>
<evidence type="ECO:0007829" key="13">
    <source>
        <dbReference type="PDB" id="7CLY"/>
    </source>
</evidence>
<proteinExistence type="evidence at protein level"/>
<gene>
    <name type="primary">Dock8</name>
</gene>
<sequence>MATLPSAERRAFALKINRYSSSEIRKQFTLPPNLGQYHRHSISTSGFPSLQLPQLYEPVEPVDFEGLVMTHLNSLDAELAQELGDLTDDDLHVAFTPKECRTLQHSLPEEGVELDPHVRDCVQTYIREWLIVNRKNQGSSEFCSFKKTGSRRDFQKTLQKQTFESETLECSEPDTQTGPRHPLNVLCDVSGKGPLTSCDFDLRSLQPDERLENLLQLVSAEDFEKEKEEARKTNRPAELFALYPPVDEEDAVEIRPVPECPKEHLGNRILVKVLTLKFEIEIEPLFASIALYDVKERKKISENFHCDLNSDQFKGFLRAHTPSIDPSSQARSAVFSVTYPSSDIYLVVKIEKVLQQGEIADCAEPYMIIKESDGGKSKEKVEKLKLQAESFCQRLGKYRMPFAWAPISLASFFNISTLERESTDVEPGVGRNSVGEKRSLSQSRRPSERTLSLEENGVGSNFKATTLATNIFFKQEGDRLSDEDLFKFLADYKRSSSLQRRVKSIPGSLRLEISPAPDVMNCCLTPEMLPVKPFPENRTRPHKEILEFPIREVYVPHTVYRNLLYVYPQRLNFASKLASARNITIKIQFMCGEDPSNAMPVIFGKSSGPEFLQEVYTAITYHNKSPDFYEEVKIKLPAKLTVNHHLLFTFYHISCQQKQGASGESLLGYSWLPILLNERLQTGSYCLPVALEKLPPNYSIHSAEKVPLQNPPIKWAEGHKGVFNIEVQAVSSVHTQDNHLEKFFTLCHSLESQVSFPIRVLDQKITESTLEHELKLSIICLNSSRLEPLVLFLHLVLDKLFQLSVQPMVIAGQTANFSQFAFESVVAIANSLHNSKDLRKDQHGRNCLLASYVHYVFRLPELHRDTSKSGGPTTVVPDPRYHTYGRTSAAAVSSKLMQARVMSSSNPDLTGSHCAADEEVKNIMSSKIADRNCSRMSYYCSGNSDAPGSTAAPRPVSKKHFHEELALQMVVSTGVVRETVFKYAWFFFELLVKSMAQYVHNLDKRDSFRRTRFSDRFKDDITTIVNVVTSEIAALLVKPQKESEQAEKINISLAFFLYDLLSIMDRGFVFNLIKHYCSQLSAKLNILPTLISMRLEFLRILCSHEHYLNLNLLFMNTDTAPASPCPSISSQNSSSCSSFQDQKIASMFDLTPEYRQQHFLTGLLFTELAVALDAEGDGISRVQRKAVSAIHSLLCSHDLDPRCRKPEVKVKIAALYLPLVGIILDALPQLYDFTDARSGRSRASGSYEEQDVANGINQNVALAIAGNHFNLKTSGAMLSSLPYKQYNMLNADTTRHLMICFLWIMKNADQSLIRKWIADLPSMQLNRILDLLFICVSCFEYKGKQSSDKVSNQVLQKSRDVKAKLEEALLRGEGARGEMMRRRIPGTDRFPGINENLRWRKEQTQWRQANEKLDKTKAELDQEALISGNLATEANLIILDMQENIIQASSALDCKDSLLGGVLRVLVNSLSCDQSTTYLTHCFATLRALIAKFGDLLFEEEMEQCADLCQRVLHHCSSSMDVTRSQACATLYLLMRFSFGATSNFARVKMQVTMALASLVGKAPDFNEEHLRRSLRTILAYSEEDTAMQTTPFPMQVEELLCNLNSILYDTVKMREFQEDPEMLMDLMYRIAKSYQASPDLRLTWLQNMAEKHTKKKCFTEAAMCLVHAAALVAEYLSMLEDHSYLPVGSVSFQNISSNVLEESAVSDDTLSPDEDGVCSGRYFTESGLVGLLEQAAELFSTGGLYETVNEVYKLVIPILEAHRDFRKLTSTHDKLQKAFDNIINKDHKRMFGTYFRVGFYGSRFGDLDEQEFVYKEPAITKLPEISHRLEGFYGQCFGAEFVEVIKDSTPVDKTKLDPNKAYIQITFVEPYFDEYEMKDRVTYFEKNFNLRRFMYTTPFTLEGRPRGELHEQHRRNTVLTTMHAFPYIKTRIRVSQKEEFVLTPIEVAIEDMKKKTLQLAVATHQEPPDAKMLQMVLQGSVGATVNQGPLEVAQVFLAEIPADPKLYRHHNKLRLCFKEFIMRCGEAVEKNRRLITAEQREYQQELKKNYNKLRDSLRPMIERKIPELYKPIFRVDSQKRDSFHRSSFRKCETQLSQGS</sequence>
<feature type="chain" id="PRO_0000189998" description="Dedicator of cytokinesis protein 8">
    <location>
        <begin position="1"/>
        <end position="2100"/>
    </location>
</feature>
<feature type="domain" description="C2 DOCK-type" evidence="2">
    <location>
        <begin position="561"/>
        <end position="730"/>
    </location>
</feature>
<feature type="domain" description="DOCKER" evidence="3">
    <location>
        <begin position="1633"/>
        <end position="2067"/>
    </location>
</feature>
<feature type="region of interest" description="Disordered" evidence="4">
    <location>
        <begin position="424"/>
        <end position="453"/>
    </location>
</feature>
<feature type="compositionally biased region" description="Basic and acidic residues" evidence="4">
    <location>
        <begin position="434"/>
        <end position="452"/>
    </location>
</feature>
<feature type="modified residue" description="Phosphoserine" evidence="1">
    <location>
        <position position="20"/>
    </location>
</feature>
<feature type="modified residue" description="Phosphoserine" evidence="1">
    <location>
        <position position="139"/>
    </location>
</feature>
<feature type="modified residue" description="Phosphoserine" evidence="1">
    <location>
        <position position="452"/>
    </location>
</feature>
<feature type="modified residue" description="Phosphoserine" evidence="11">
    <location>
        <position position="905"/>
    </location>
</feature>
<feature type="modified residue" description="Phosphoserine" evidence="1">
    <location>
        <position position="937"/>
    </location>
</feature>
<feature type="modified residue" description="Phosphoserine" evidence="1">
    <location>
        <position position="1146"/>
    </location>
</feature>
<feature type="modified residue" description="Phosphoserine" evidence="11">
    <location>
        <position position="1244"/>
    </location>
</feature>
<feature type="modified residue" description="Phosphoserine" evidence="1">
    <location>
        <position position="2088"/>
    </location>
</feature>
<feature type="splice variant" id="VSP_027374" description="In isoform 2." evidence="8">
    <location>
        <begin position="1"/>
        <end position="366"/>
    </location>
</feature>
<feature type="splice variant" id="VSP_027375" description="In isoform 2." evidence="8">
    <original>ESE</original>
    <variation>VAV</variation>
    <location>
        <begin position="1042"/>
        <end position="1044"/>
    </location>
</feature>
<feature type="splice variant" id="VSP_027376" description="In isoform 2." evidence="8">
    <location>
        <begin position="1045"/>
        <end position="2100"/>
    </location>
</feature>
<feature type="mutagenesis site" description="In an experimental autoimmune encephalomyelitis (EAE) disease model, 50 percent of animals have no EAE symptoms. In the remaining animals, EAE is less severe with a reduction in the demyelination of the spinal cord and in the number of CD4(+) T-cells infiltrating the central nervous system. In addition, CD4(+) T-cell proliferation and apoptosis are increased. Reduced CD4(+) T-cell transmigration towards chemokine CXCL12 and CCL5." evidence="7">
    <original>S</original>
    <variation>P</variation>
    <location>
        <position position="1827"/>
    </location>
</feature>
<feature type="sequence conflict" description="In Ref. 2; BAC26219." evidence="9" ref="2">
    <original>L</original>
    <variation>M</variation>
    <location>
        <position position="1608"/>
    </location>
</feature>
<feature type="sequence conflict" description="In Ref. 3; AAH43470." evidence="9" ref="3">
    <original>E</original>
    <variation>K</variation>
    <location>
        <position position="1616"/>
    </location>
</feature>
<feature type="strand" evidence="13">
    <location>
        <begin position="559"/>
        <end position="571"/>
    </location>
</feature>
<feature type="helix" evidence="13">
    <location>
        <begin position="578"/>
        <end position="580"/>
    </location>
</feature>
<feature type="strand" evidence="13">
    <location>
        <begin position="584"/>
        <end position="594"/>
    </location>
</feature>
<feature type="helix" evidence="13">
    <location>
        <begin position="595"/>
        <end position="597"/>
    </location>
</feature>
<feature type="turn" evidence="13">
    <location>
        <begin position="607"/>
        <end position="609"/>
    </location>
</feature>
<feature type="strand" evidence="13">
    <location>
        <begin position="611"/>
        <end position="613"/>
    </location>
</feature>
<feature type="strand" evidence="13">
    <location>
        <begin position="615"/>
        <end position="617"/>
    </location>
</feature>
<feature type="strand" evidence="13">
    <location>
        <begin position="632"/>
        <end position="635"/>
    </location>
</feature>
<feature type="strand" evidence="13">
    <location>
        <begin position="645"/>
        <end position="652"/>
    </location>
</feature>
<feature type="helix" evidence="13">
    <location>
        <begin position="658"/>
        <end position="660"/>
    </location>
</feature>
<feature type="strand" evidence="13">
    <location>
        <begin position="665"/>
        <end position="676"/>
    </location>
</feature>
<feature type="strand" evidence="13">
    <location>
        <begin position="683"/>
        <end position="687"/>
    </location>
</feature>
<feature type="strand" evidence="13">
    <location>
        <begin position="690"/>
        <end position="692"/>
    </location>
</feature>
<feature type="helix" evidence="13">
    <location>
        <begin position="698"/>
        <end position="700"/>
    </location>
</feature>
<feature type="helix" evidence="13">
    <location>
        <begin position="716"/>
        <end position="719"/>
    </location>
</feature>
<feature type="strand" evidence="13">
    <location>
        <begin position="723"/>
        <end position="734"/>
    </location>
</feature>
<feature type="strand" evidence="12">
    <location>
        <begin position="1794"/>
        <end position="1802"/>
    </location>
</feature>
<feature type="helix" evidence="12">
    <location>
        <begin position="1803"/>
        <end position="1808"/>
    </location>
</feature>
<feature type="strand" evidence="12">
    <location>
        <begin position="1812"/>
        <end position="1820"/>
    </location>
</feature>
<feature type="helix" evidence="12">
    <location>
        <begin position="1823"/>
        <end position="1838"/>
    </location>
</feature>
<feature type="helix" evidence="12">
    <location>
        <begin position="1840"/>
        <end position="1842"/>
    </location>
</feature>
<feature type="strand" evidence="12">
    <location>
        <begin position="1843"/>
        <end position="1846"/>
    </location>
</feature>
<feature type="helix" evidence="12">
    <location>
        <begin position="1854"/>
        <end position="1856"/>
    </location>
</feature>
<feature type="strand" evidence="12">
    <location>
        <begin position="1861"/>
        <end position="1871"/>
    </location>
</feature>
<feature type="helix" evidence="12">
    <location>
        <begin position="1875"/>
        <end position="1878"/>
    </location>
</feature>
<feature type="strand" evidence="12">
    <location>
        <begin position="1891"/>
        <end position="1900"/>
    </location>
</feature>
<feature type="strand" evidence="12">
    <location>
        <begin position="1904"/>
        <end position="1906"/>
    </location>
</feature>
<feature type="helix" evidence="12">
    <location>
        <begin position="1910"/>
        <end position="1912"/>
    </location>
</feature>
<feature type="strand" evidence="12">
    <location>
        <begin position="1914"/>
        <end position="1927"/>
    </location>
</feature>
<feature type="strand" evidence="12">
    <location>
        <begin position="1929"/>
        <end position="1943"/>
    </location>
</feature>
<feature type="helix" evidence="12">
    <location>
        <begin position="1945"/>
        <end position="1965"/>
    </location>
</feature>
<feature type="helix" evidence="12">
    <location>
        <begin position="1971"/>
        <end position="1982"/>
    </location>
</feature>
<feature type="strand" evidence="12">
    <location>
        <begin position="1985"/>
        <end position="1987"/>
    </location>
</feature>
<feature type="helix" evidence="12">
    <location>
        <begin position="1990"/>
        <end position="1997"/>
    </location>
</feature>
<feature type="helix" evidence="12">
    <location>
        <begin position="2005"/>
        <end position="2035"/>
    </location>
</feature>
<feature type="helix" evidence="12">
    <location>
        <begin position="2038"/>
        <end position="2040"/>
    </location>
</feature>
<feature type="helix" evidence="12">
    <location>
        <begin position="2041"/>
        <end position="2062"/>
    </location>
</feature>
<accession>Q8C147</accession>
<accession>Q6KAM7</accession>
<accession>Q6PIS0</accession>
<accession>Q7TMQ5</accession>
<accession>Q8CAP6</accession>
<accession>Q8K105</accession>
<accession>Q9DBQ2</accession>
<comment type="function">
    <text evidence="1 5 6 7">Guanine nucleotide exchange factor (GEF) which specifically activates small GTPase CDC42 by exchanging bound GDP for free GTP (PubMed:22461490, PubMed:28028151). During immune responses, required for interstitial dendritic cell (DC) migration by locally activating CDC42 at the leading edge membrane of DC (PubMed:22461490, PubMed:25713392). Required for CD4(+) T-cell migration in response to chemokine stimulation by promoting CDC42 activation at T cell leading edge membrane (PubMed:28028151). Is involved in NK cell cytotoxicity controlling polarization of microtubule-organizing center (MTOC), and possibly regulating CCDC88B-mediated lytic granule transport to MTOC during cell killing (By similarity).</text>
</comment>
<comment type="subunit">
    <text evidence="1 5 7">Interacts (via DOCKER domain) with GTPase CDC42; the interaction activates CDC42 by exchanging GDP for GTP (PubMed:22461490). The unphosphorylated form interacts (via DOCKER domain) with LRCH1 (via LRR repeats); the interaction prevents the association between DOCK8 and CDC42 (PubMed:28028151). Interacts with CCDC88B (By similarity).</text>
</comment>
<comment type="subcellular location">
    <subcellularLocation>
        <location evidence="1">Cytoplasm</location>
    </subcellularLocation>
    <subcellularLocation>
        <location evidence="5">Cell membrane</location>
        <topology evidence="10">Peripheral membrane protein</topology>
        <orientation evidence="9">Cytoplasmic side</orientation>
    </subcellularLocation>
    <subcellularLocation>
        <location evidence="10">Cell projection</location>
        <location evidence="10">Lamellipodium membrane</location>
        <topology evidence="10">Peripheral membrane protein</topology>
        <orientation evidence="9">Cytoplasmic side</orientation>
    </subcellularLocation>
    <text evidence="1">Enriched and co-localizes with GTPase CDC42 at the immunological synapse formed during T cell/antigen presenting cell cognate interaction. Translocates from the cytoplasm to the plasma membrane in response to chemokine CXCL12/SDF-1-alpha stimulation.</text>
</comment>
<comment type="alternative products">
    <event type="alternative splicing"/>
    <isoform>
        <id>Q8C147-1</id>
        <name>1</name>
        <sequence type="displayed"/>
    </isoform>
    <isoform>
        <id>Q8C147-2</id>
        <name>2</name>
        <sequence type="described" ref="VSP_027374 VSP_027375 VSP_027376"/>
    </isoform>
</comment>
<comment type="tissue specificity">
    <text evidence="6 7">Expressed in T cells (PubMed:28028151). Expressed in bone marrow-derived dendritic cells (PubMed:25713392).</text>
</comment>
<comment type="domain">
    <text evidence="5">The DOCKER domain is necessary and sufficient for the GEF activity.</text>
</comment>
<comment type="PTM">
    <text evidence="1">In response to chemokine CXCL12/SDF-1-alpha stimulation, phosphorylated by PRKCA/PKC-alpha which promotes DOCK8 dissociation from LRCH1.</text>
</comment>
<comment type="polymorphism">
    <text evidence="6">Strain C3H/HeJ mice harbor a point mutation in Dock8 which results in impaired dendritic cell migration. The mutation is not observed in strains CBA/J, C3H/HeOuJ or C3HeB/FeJ.</text>
</comment>
<comment type="disruption phenotype">
    <text evidence="5 6">Mice are viable and fertile (PubMed:22461490). The number of CD4(+) and CD8(+) T-cells are reduced by 50 percent in the spleen and peripheral lymph nodes (PubMed:22461490). The number of marginal zone B cells in the spleen are also reduced (PubMed:22461490). In response to an immune challenge, impaired migration of epidermal dendritic cells to the draining lymph nodes resulting in a failure to prime CD4(+) T-cells characterized by a lack of CD4(+) T-cell proliferation in lymph nodes and a lack of antigen-specific IgG antibody production (PubMed:22461490, PubMed:25713392).</text>
</comment>
<comment type="similarity">
    <text evidence="2">Belongs to the DOCK family.</text>
</comment>
<comment type="sequence caution" evidence="9">
    <conflict type="erroneous initiation">
        <sequence resource="EMBL-CDS" id="AAH30316"/>
    </conflict>
</comment>
<comment type="sequence caution" evidence="9">
    <conflict type="erroneous initiation">
        <sequence resource="EMBL-CDS" id="BAB23587"/>
    </conflict>
</comment>
<comment type="sequence caution" evidence="9">
    <conflict type="erroneous initiation">
        <sequence resource="EMBL-CDS" id="BAC26219"/>
    </conflict>
</comment>
<comment type="sequence caution" evidence="9">
    <conflict type="erroneous initiation">
        <sequence resource="EMBL-CDS" id="BAD21430"/>
    </conflict>
</comment>